<organism>
    <name type="scientific">Bacillus subtilis (strain 168)</name>
    <dbReference type="NCBI Taxonomy" id="224308"/>
    <lineage>
        <taxon>Bacteria</taxon>
        <taxon>Bacillati</taxon>
        <taxon>Bacillota</taxon>
        <taxon>Bacilli</taxon>
        <taxon>Bacillales</taxon>
        <taxon>Bacillaceae</taxon>
        <taxon>Bacillus</taxon>
    </lineage>
</organism>
<feature type="chain" id="PRO_0000375920" description="Uncharacterized MFS-type transporter YfkL">
    <location>
        <begin position="1"/>
        <end position="396"/>
    </location>
</feature>
<feature type="transmembrane region" description="Helical" evidence="1">
    <location>
        <begin position="8"/>
        <end position="28"/>
    </location>
</feature>
<feature type="transmembrane region" description="Helical" evidence="1">
    <location>
        <begin position="44"/>
        <end position="64"/>
    </location>
</feature>
<feature type="transmembrane region" description="Helical" evidence="1">
    <location>
        <begin position="73"/>
        <end position="93"/>
    </location>
</feature>
<feature type="transmembrane region" description="Helical" evidence="1">
    <location>
        <begin position="97"/>
        <end position="117"/>
    </location>
</feature>
<feature type="transmembrane region" description="Helical" evidence="1">
    <location>
        <begin position="133"/>
        <end position="153"/>
    </location>
</feature>
<feature type="transmembrane region" description="Helical" evidence="1">
    <location>
        <begin position="158"/>
        <end position="178"/>
    </location>
</feature>
<feature type="transmembrane region" description="Helical" evidence="1">
    <location>
        <begin position="213"/>
        <end position="233"/>
    </location>
</feature>
<feature type="transmembrane region" description="Helical" evidence="1">
    <location>
        <begin position="250"/>
        <end position="270"/>
    </location>
</feature>
<feature type="transmembrane region" description="Helical" evidence="1">
    <location>
        <begin position="276"/>
        <end position="296"/>
    </location>
</feature>
<feature type="transmembrane region" description="Helical" evidence="1">
    <location>
        <begin position="304"/>
        <end position="324"/>
    </location>
</feature>
<feature type="transmembrane region" description="Helical" evidence="1">
    <location>
        <begin position="338"/>
        <end position="358"/>
    </location>
</feature>
<feature type="transmembrane region" description="Helical" evidence="1">
    <location>
        <begin position="363"/>
        <end position="383"/>
    </location>
</feature>
<comment type="subcellular location">
    <subcellularLocation>
        <location evidence="2">Cell membrane</location>
        <topology evidence="2">Multi-pass membrane protein</topology>
    </subcellularLocation>
</comment>
<comment type="similarity">
    <text evidence="2">Belongs to the major facilitator superfamily.</text>
</comment>
<accession>O34597</accession>
<accession>Q79EX7</accession>
<proteinExistence type="inferred from homology"/>
<gene>
    <name type="primary">yfkL</name>
    <name type="ordered locus">BSU07860</name>
</gene>
<dbReference type="EMBL" id="D83967">
    <property type="protein sequence ID" value="BAA23402.1"/>
    <property type="molecule type" value="Genomic_DNA"/>
</dbReference>
<dbReference type="EMBL" id="AL009126">
    <property type="protein sequence ID" value="CAB12615.1"/>
    <property type="molecule type" value="Genomic_DNA"/>
</dbReference>
<dbReference type="PIR" id="G69808">
    <property type="entry name" value="G69808"/>
</dbReference>
<dbReference type="RefSeq" id="NP_388667.1">
    <property type="nucleotide sequence ID" value="NC_000964.3"/>
</dbReference>
<dbReference type="RefSeq" id="WP_003243812.1">
    <property type="nucleotide sequence ID" value="NZ_OZ025638.1"/>
</dbReference>
<dbReference type="SMR" id="O34597"/>
<dbReference type="FunCoup" id="O34597">
    <property type="interactions" value="12"/>
</dbReference>
<dbReference type="STRING" id="224308.BSU07860"/>
<dbReference type="PaxDb" id="224308-BSU07860"/>
<dbReference type="EnsemblBacteria" id="CAB12615">
    <property type="protein sequence ID" value="CAB12615"/>
    <property type="gene ID" value="BSU_07860"/>
</dbReference>
<dbReference type="GeneID" id="939689"/>
<dbReference type="KEGG" id="bsu:BSU07860"/>
<dbReference type="PATRIC" id="fig|224308.179.peg.850"/>
<dbReference type="eggNOG" id="COG2814">
    <property type="taxonomic scope" value="Bacteria"/>
</dbReference>
<dbReference type="InParanoid" id="O34597"/>
<dbReference type="OrthoDB" id="7066727at2"/>
<dbReference type="PhylomeDB" id="O34597"/>
<dbReference type="BioCyc" id="BSUB:BSU07860-MONOMER"/>
<dbReference type="Proteomes" id="UP000001570">
    <property type="component" value="Chromosome"/>
</dbReference>
<dbReference type="GO" id="GO:0016020">
    <property type="term" value="C:membrane"/>
    <property type="evidence" value="ECO:0000318"/>
    <property type="project" value="GO_Central"/>
</dbReference>
<dbReference type="GO" id="GO:0005886">
    <property type="term" value="C:plasma membrane"/>
    <property type="evidence" value="ECO:0007669"/>
    <property type="project" value="UniProtKB-SubCell"/>
</dbReference>
<dbReference type="GO" id="GO:0022857">
    <property type="term" value="F:transmembrane transporter activity"/>
    <property type="evidence" value="ECO:0007669"/>
    <property type="project" value="InterPro"/>
</dbReference>
<dbReference type="CDD" id="cd17396">
    <property type="entry name" value="MFS_YdiM_like"/>
    <property type="match status" value="1"/>
</dbReference>
<dbReference type="Gene3D" id="1.20.1250.20">
    <property type="entry name" value="MFS general substrate transporter like domains"/>
    <property type="match status" value="2"/>
</dbReference>
<dbReference type="InterPro" id="IPR011701">
    <property type="entry name" value="MFS"/>
</dbReference>
<dbReference type="InterPro" id="IPR020846">
    <property type="entry name" value="MFS_dom"/>
</dbReference>
<dbReference type="InterPro" id="IPR036259">
    <property type="entry name" value="MFS_trans_sf"/>
</dbReference>
<dbReference type="InterPro" id="IPR051788">
    <property type="entry name" value="MFS_Transporter"/>
</dbReference>
<dbReference type="InterPro" id="IPR005829">
    <property type="entry name" value="Sugar_transporter_CS"/>
</dbReference>
<dbReference type="PANTHER" id="PTHR23514">
    <property type="entry name" value="BYPASS OF STOP CODON PROTEIN 6"/>
    <property type="match status" value="1"/>
</dbReference>
<dbReference type="PANTHER" id="PTHR23514:SF3">
    <property type="entry name" value="BYPASS OF STOP CODON PROTEIN 6"/>
    <property type="match status" value="1"/>
</dbReference>
<dbReference type="Pfam" id="PF07690">
    <property type="entry name" value="MFS_1"/>
    <property type="match status" value="1"/>
</dbReference>
<dbReference type="SUPFAM" id="SSF103473">
    <property type="entry name" value="MFS general substrate transporter"/>
    <property type="match status" value="1"/>
</dbReference>
<dbReference type="PROSITE" id="PS50850">
    <property type="entry name" value="MFS"/>
    <property type="match status" value="1"/>
</dbReference>
<dbReference type="PROSITE" id="PS00216">
    <property type="entry name" value="SUGAR_TRANSPORT_1"/>
    <property type="match status" value="1"/>
</dbReference>
<sequence>MQTTSIKTASGMYINYFFLGMVNIILASNMSSLTKQWNTDPTGISYVIAAIGFGKLLTYGISGVLSDKIGRKPLVVASAGIMAVFLVGIPLSPSYELAFVFALLAGVANSAMDAGTYPALTELFPSASGSANVLVKAFMSVGAALLPLLITFLADHSMFYGFAFYLPAAVYLLNIIYLSTLSFPKKHKKPTNSGQQESPVFLSEPVFQKEGTALIIIGFTSTALFTVSQIWLPSYAQKAAGLAESASVQLLSYYSIGSLASVLLLAVLLNRWVKPVFITLLYPIITLCTLAVMLTVHIPVVLDITAFFLGFSTAGVFQITITLMTELFWKRKGTVTGIVATASSLASILLPIATGLIAKAGGIAHIFIFDFGIAVIGTAAAAFLYYRYKKLTGAQA</sequence>
<keyword id="KW-1003">Cell membrane</keyword>
<keyword id="KW-0472">Membrane</keyword>
<keyword id="KW-1185">Reference proteome</keyword>
<keyword id="KW-0812">Transmembrane</keyword>
<keyword id="KW-1133">Transmembrane helix</keyword>
<keyword id="KW-0813">Transport</keyword>
<evidence type="ECO:0000255" key="1"/>
<evidence type="ECO:0000305" key="2"/>
<name>YFKL_BACSU</name>
<protein>
    <recommendedName>
        <fullName>Uncharacterized MFS-type transporter YfkL</fullName>
    </recommendedName>
</protein>
<reference key="1">
    <citation type="journal article" date="1996" name="Microbiology">
        <title>Cloning and sequencing of a 40.6 kb segment in the 73 degrees-76 degrees region of the Bacillus subtilis chromosome containing genes for trehalose metabolism and acetoin utilization.</title>
        <authorList>
            <person name="Yamamoto H."/>
            <person name="Uchiyama S."/>
            <person name="Sekiguchi J."/>
        </authorList>
    </citation>
    <scope>NUCLEOTIDE SEQUENCE [GENOMIC DNA]</scope>
    <source>
        <strain>168 / AC327</strain>
    </source>
</reference>
<reference key="2">
    <citation type="journal article" date="1997" name="Nature">
        <title>The complete genome sequence of the Gram-positive bacterium Bacillus subtilis.</title>
        <authorList>
            <person name="Kunst F."/>
            <person name="Ogasawara N."/>
            <person name="Moszer I."/>
            <person name="Albertini A.M."/>
            <person name="Alloni G."/>
            <person name="Azevedo V."/>
            <person name="Bertero M.G."/>
            <person name="Bessieres P."/>
            <person name="Bolotin A."/>
            <person name="Borchert S."/>
            <person name="Borriss R."/>
            <person name="Boursier L."/>
            <person name="Brans A."/>
            <person name="Braun M."/>
            <person name="Brignell S.C."/>
            <person name="Bron S."/>
            <person name="Brouillet S."/>
            <person name="Bruschi C.V."/>
            <person name="Caldwell B."/>
            <person name="Capuano V."/>
            <person name="Carter N.M."/>
            <person name="Choi S.-K."/>
            <person name="Codani J.-J."/>
            <person name="Connerton I.F."/>
            <person name="Cummings N.J."/>
            <person name="Daniel R.A."/>
            <person name="Denizot F."/>
            <person name="Devine K.M."/>
            <person name="Duesterhoeft A."/>
            <person name="Ehrlich S.D."/>
            <person name="Emmerson P.T."/>
            <person name="Entian K.-D."/>
            <person name="Errington J."/>
            <person name="Fabret C."/>
            <person name="Ferrari E."/>
            <person name="Foulger D."/>
            <person name="Fritz C."/>
            <person name="Fujita M."/>
            <person name="Fujita Y."/>
            <person name="Fuma S."/>
            <person name="Galizzi A."/>
            <person name="Galleron N."/>
            <person name="Ghim S.-Y."/>
            <person name="Glaser P."/>
            <person name="Goffeau A."/>
            <person name="Golightly E.J."/>
            <person name="Grandi G."/>
            <person name="Guiseppi G."/>
            <person name="Guy B.J."/>
            <person name="Haga K."/>
            <person name="Haiech J."/>
            <person name="Harwood C.R."/>
            <person name="Henaut A."/>
            <person name="Hilbert H."/>
            <person name="Holsappel S."/>
            <person name="Hosono S."/>
            <person name="Hullo M.-F."/>
            <person name="Itaya M."/>
            <person name="Jones L.-M."/>
            <person name="Joris B."/>
            <person name="Karamata D."/>
            <person name="Kasahara Y."/>
            <person name="Klaerr-Blanchard M."/>
            <person name="Klein C."/>
            <person name="Kobayashi Y."/>
            <person name="Koetter P."/>
            <person name="Koningstein G."/>
            <person name="Krogh S."/>
            <person name="Kumano M."/>
            <person name="Kurita K."/>
            <person name="Lapidus A."/>
            <person name="Lardinois S."/>
            <person name="Lauber J."/>
            <person name="Lazarevic V."/>
            <person name="Lee S.-M."/>
            <person name="Levine A."/>
            <person name="Liu H."/>
            <person name="Masuda S."/>
            <person name="Mauel C."/>
            <person name="Medigue C."/>
            <person name="Medina N."/>
            <person name="Mellado R.P."/>
            <person name="Mizuno M."/>
            <person name="Moestl D."/>
            <person name="Nakai S."/>
            <person name="Noback M."/>
            <person name="Noone D."/>
            <person name="O'Reilly M."/>
            <person name="Ogawa K."/>
            <person name="Ogiwara A."/>
            <person name="Oudega B."/>
            <person name="Park S.-H."/>
            <person name="Parro V."/>
            <person name="Pohl T.M."/>
            <person name="Portetelle D."/>
            <person name="Porwollik S."/>
            <person name="Prescott A.M."/>
            <person name="Presecan E."/>
            <person name="Pujic P."/>
            <person name="Purnelle B."/>
            <person name="Rapoport G."/>
            <person name="Rey M."/>
            <person name="Reynolds S."/>
            <person name="Rieger M."/>
            <person name="Rivolta C."/>
            <person name="Rocha E."/>
            <person name="Roche B."/>
            <person name="Rose M."/>
            <person name="Sadaie Y."/>
            <person name="Sato T."/>
            <person name="Scanlan E."/>
            <person name="Schleich S."/>
            <person name="Schroeter R."/>
            <person name="Scoffone F."/>
            <person name="Sekiguchi J."/>
            <person name="Sekowska A."/>
            <person name="Seror S.J."/>
            <person name="Serror P."/>
            <person name="Shin B.-S."/>
            <person name="Soldo B."/>
            <person name="Sorokin A."/>
            <person name="Tacconi E."/>
            <person name="Takagi T."/>
            <person name="Takahashi H."/>
            <person name="Takemaru K."/>
            <person name="Takeuchi M."/>
            <person name="Tamakoshi A."/>
            <person name="Tanaka T."/>
            <person name="Terpstra P."/>
            <person name="Tognoni A."/>
            <person name="Tosato V."/>
            <person name="Uchiyama S."/>
            <person name="Vandenbol M."/>
            <person name="Vannier F."/>
            <person name="Vassarotti A."/>
            <person name="Viari A."/>
            <person name="Wambutt R."/>
            <person name="Wedler E."/>
            <person name="Wedler H."/>
            <person name="Weitzenegger T."/>
            <person name="Winters P."/>
            <person name="Wipat A."/>
            <person name="Yamamoto H."/>
            <person name="Yamane K."/>
            <person name="Yasumoto K."/>
            <person name="Yata K."/>
            <person name="Yoshida K."/>
            <person name="Yoshikawa H.-F."/>
            <person name="Zumstein E."/>
            <person name="Yoshikawa H."/>
            <person name="Danchin A."/>
        </authorList>
    </citation>
    <scope>NUCLEOTIDE SEQUENCE [LARGE SCALE GENOMIC DNA]</scope>
    <source>
        <strain>168</strain>
    </source>
</reference>